<proteinExistence type="inferred from homology"/>
<sequence length="863" mass="95596">MSKNTSDLSSHTPMMQQYWRLKNQHPDQLMFYRMGDFYEIFYEDAKKAAKLLDITLTARGQSAGQSIPMCGIPYHSLEGYLVKLVKLGESVVICEQIGDPATSKGPVERQVVRIITPGTVSDEALLDERRDNLIAAVLGDERLFGLSVLDITSGNFSVLEIKGWENLLAELERINPVELLIPDDWPKDLPAEKRRGTKRRAPWDFERDSALKSLCQQFSVQDLKGFGCETLTLAIGAAGCLLGYAKETQRTALPHLRSLRHERLDDTVVLDGASRRNLELDTNLAGGRDNTLQSVVDRCQTAMGSRLLTRWLNRPLRDLTVLQARQTSITCLLDGYRFEKLQPQLKEIGDIERILARIGLRNARPRDLARLRDALGALPQLQVAMTELDTPHLQQLAVTAGTYPELAALLEKAIIDNPPAIIRDGGVLKTGYDSELDELQSLSENAGQFLIDLEAREKARTGLANLKVGYNRVHGYFIELPSKQAESAPIDYQRRQTLKGAERFITPELKAFEDKALSAKSRALAREKMLYEALLEDLISQLAPLQDTAAALAELDVLSNLAERALNLDLNCPRFVSEPCMRIVQGRHPVVEQVLTTPFVANDLSLDDDTRMLVITGPNMGGKSTYMRQTALIVLLAHIGSFVPAASCELSLVDRIFTRIGSSDDLAGGRSTFMVEMSETANILHNATERSLVLMDEVGRGTSTFDGLSLAWAAAERLAHLRAYTLFATHYFELTVLPESEPLVTNVHLNATEHNERIVFLHHVLPGPASQSYGLAVAQLAGVPNDVITRAREHLSRLETTALPHETVVASPTKATSKPAAPHQSDMFASLPHPVLDELAKLDLDGLTPRKALEMLYALQVRI</sequence>
<evidence type="ECO:0000255" key="1">
    <source>
        <dbReference type="HAMAP-Rule" id="MF_00096"/>
    </source>
</evidence>
<gene>
    <name evidence="1" type="primary">mutS</name>
    <name type="ordered locus">PFLU_1164</name>
</gene>
<comment type="function">
    <text evidence="1">This protein is involved in the repair of mismatches in DNA. It is possible that it carries out the mismatch recognition step. This protein has a weak ATPase activity.</text>
</comment>
<comment type="similarity">
    <text evidence="1">Belongs to the DNA mismatch repair MutS family.</text>
</comment>
<name>MUTS_PSEFS</name>
<reference key="1">
    <citation type="journal article" date="2009" name="Genome Biol.">
        <title>Genomic and genetic analyses of diversity and plant interactions of Pseudomonas fluorescens.</title>
        <authorList>
            <person name="Silby M.W."/>
            <person name="Cerdeno-Tarraga A.M."/>
            <person name="Vernikos G.S."/>
            <person name="Giddens S.R."/>
            <person name="Jackson R.W."/>
            <person name="Preston G.M."/>
            <person name="Zhang X.-X."/>
            <person name="Moon C.D."/>
            <person name="Gehrig S.M."/>
            <person name="Godfrey S.A.C."/>
            <person name="Knight C.G."/>
            <person name="Malone J.G."/>
            <person name="Robinson Z."/>
            <person name="Spiers A.J."/>
            <person name="Harris S."/>
            <person name="Challis G.L."/>
            <person name="Yaxley A.M."/>
            <person name="Harris D."/>
            <person name="Seeger K."/>
            <person name="Murphy L."/>
            <person name="Rutter S."/>
            <person name="Squares R."/>
            <person name="Quail M.A."/>
            <person name="Saunders E."/>
            <person name="Mavromatis K."/>
            <person name="Brettin T.S."/>
            <person name="Bentley S.D."/>
            <person name="Hothersall J."/>
            <person name="Stephens E."/>
            <person name="Thomas C.M."/>
            <person name="Parkhill J."/>
            <person name="Levy S.B."/>
            <person name="Rainey P.B."/>
            <person name="Thomson N.R."/>
        </authorList>
    </citation>
    <scope>NUCLEOTIDE SEQUENCE [LARGE SCALE GENOMIC DNA]</scope>
    <source>
        <strain>SBW25</strain>
    </source>
</reference>
<accession>C3KCT2</accession>
<protein>
    <recommendedName>
        <fullName evidence="1">DNA mismatch repair protein MutS</fullName>
    </recommendedName>
</protein>
<organism>
    <name type="scientific">Pseudomonas fluorescens (strain SBW25)</name>
    <dbReference type="NCBI Taxonomy" id="216595"/>
    <lineage>
        <taxon>Bacteria</taxon>
        <taxon>Pseudomonadati</taxon>
        <taxon>Pseudomonadota</taxon>
        <taxon>Gammaproteobacteria</taxon>
        <taxon>Pseudomonadales</taxon>
        <taxon>Pseudomonadaceae</taxon>
        <taxon>Pseudomonas</taxon>
    </lineage>
</organism>
<keyword id="KW-0067">ATP-binding</keyword>
<keyword id="KW-0227">DNA damage</keyword>
<keyword id="KW-0234">DNA repair</keyword>
<keyword id="KW-0238">DNA-binding</keyword>
<keyword id="KW-0547">Nucleotide-binding</keyword>
<feature type="chain" id="PRO_1000202742" description="DNA mismatch repair protein MutS">
    <location>
        <begin position="1"/>
        <end position="863"/>
    </location>
</feature>
<feature type="binding site" evidence="1">
    <location>
        <begin position="617"/>
        <end position="624"/>
    </location>
    <ligand>
        <name>ATP</name>
        <dbReference type="ChEBI" id="CHEBI:30616"/>
    </ligand>
</feature>
<dbReference type="EMBL" id="AM181176">
    <property type="protein sequence ID" value="CAY47426.1"/>
    <property type="molecule type" value="Genomic_DNA"/>
</dbReference>
<dbReference type="RefSeq" id="WP_012722497.1">
    <property type="nucleotide sequence ID" value="NC_012660.1"/>
</dbReference>
<dbReference type="SMR" id="C3KCT2"/>
<dbReference type="STRING" id="294.SRM1_01162"/>
<dbReference type="PATRIC" id="fig|216595.4.peg.1398"/>
<dbReference type="eggNOG" id="COG0249">
    <property type="taxonomic scope" value="Bacteria"/>
</dbReference>
<dbReference type="HOGENOM" id="CLU_002472_4_0_6"/>
<dbReference type="OrthoDB" id="9802448at2"/>
<dbReference type="GO" id="GO:0005829">
    <property type="term" value="C:cytosol"/>
    <property type="evidence" value="ECO:0007669"/>
    <property type="project" value="TreeGrafter"/>
</dbReference>
<dbReference type="GO" id="GO:0005524">
    <property type="term" value="F:ATP binding"/>
    <property type="evidence" value="ECO:0007669"/>
    <property type="project" value="UniProtKB-UniRule"/>
</dbReference>
<dbReference type="GO" id="GO:0140664">
    <property type="term" value="F:ATP-dependent DNA damage sensor activity"/>
    <property type="evidence" value="ECO:0007669"/>
    <property type="project" value="InterPro"/>
</dbReference>
<dbReference type="GO" id="GO:0003684">
    <property type="term" value="F:damaged DNA binding"/>
    <property type="evidence" value="ECO:0007669"/>
    <property type="project" value="UniProtKB-UniRule"/>
</dbReference>
<dbReference type="GO" id="GO:0030983">
    <property type="term" value="F:mismatched DNA binding"/>
    <property type="evidence" value="ECO:0007669"/>
    <property type="project" value="InterPro"/>
</dbReference>
<dbReference type="GO" id="GO:0006298">
    <property type="term" value="P:mismatch repair"/>
    <property type="evidence" value="ECO:0007669"/>
    <property type="project" value="UniProtKB-UniRule"/>
</dbReference>
<dbReference type="CDD" id="cd03284">
    <property type="entry name" value="ABC_MutS1"/>
    <property type="match status" value="1"/>
</dbReference>
<dbReference type="FunFam" id="1.10.1420.10:FF:000002">
    <property type="entry name" value="DNA mismatch repair protein MutS"/>
    <property type="match status" value="1"/>
</dbReference>
<dbReference type="FunFam" id="3.40.1170.10:FF:000001">
    <property type="entry name" value="DNA mismatch repair protein MutS"/>
    <property type="match status" value="1"/>
</dbReference>
<dbReference type="FunFam" id="3.40.50.300:FF:000283">
    <property type="entry name" value="DNA mismatch repair protein MutS"/>
    <property type="match status" value="1"/>
</dbReference>
<dbReference type="Gene3D" id="1.10.1420.10">
    <property type="match status" value="2"/>
</dbReference>
<dbReference type="Gene3D" id="6.10.140.430">
    <property type="match status" value="1"/>
</dbReference>
<dbReference type="Gene3D" id="3.40.1170.10">
    <property type="entry name" value="DNA repair protein MutS, domain I"/>
    <property type="match status" value="1"/>
</dbReference>
<dbReference type="Gene3D" id="3.30.420.110">
    <property type="entry name" value="MutS, connector domain"/>
    <property type="match status" value="1"/>
</dbReference>
<dbReference type="Gene3D" id="3.40.50.300">
    <property type="entry name" value="P-loop containing nucleotide triphosphate hydrolases"/>
    <property type="match status" value="1"/>
</dbReference>
<dbReference type="HAMAP" id="MF_00096">
    <property type="entry name" value="MutS"/>
    <property type="match status" value="1"/>
</dbReference>
<dbReference type="InterPro" id="IPR005748">
    <property type="entry name" value="DNA_mismatch_repair_MutS"/>
</dbReference>
<dbReference type="InterPro" id="IPR007695">
    <property type="entry name" value="DNA_mismatch_repair_MutS-lik_N"/>
</dbReference>
<dbReference type="InterPro" id="IPR017261">
    <property type="entry name" value="DNA_mismatch_repair_MutS/MSH"/>
</dbReference>
<dbReference type="InterPro" id="IPR000432">
    <property type="entry name" value="DNA_mismatch_repair_MutS_C"/>
</dbReference>
<dbReference type="InterPro" id="IPR007861">
    <property type="entry name" value="DNA_mismatch_repair_MutS_clamp"/>
</dbReference>
<dbReference type="InterPro" id="IPR007696">
    <property type="entry name" value="DNA_mismatch_repair_MutS_core"/>
</dbReference>
<dbReference type="InterPro" id="IPR016151">
    <property type="entry name" value="DNA_mismatch_repair_MutS_N"/>
</dbReference>
<dbReference type="InterPro" id="IPR036187">
    <property type="entry name" value="DNA_mismatch_repair_MutS_sf"/>
</dbReference>
<dbReference type="InterPro" id="IPR007860">
    <property type="entry name" value="DNA_mmatch_repair_MutS_con_dom"/>
</dbReference>
<dbReference type="InterPro" id="IPR045076">
    <property type="entry name" value="MutS"/>
</dbReference>
<dbReference type="InterPro" id="IPR036678">
    <property type="entry name" value="MutS_con_dom_sf"/>
</dbReference>
<dbReference type="InterPro" id="IPR027417">
    <property type="entry name" value="P-loop_NTPase"/>
</dbReference>
<dbReference type="NCBIfam" id="TIGR01070">
    <property type="entry name" value="mutS1"/>
    <property type="match status" value="1"/>
</dbReference>
<dbReference type="NCBIfam" id="NF003810">
    <property type="entry name" value="PRK05399.1"/>
    <property type="match status" value="1"/>
</dbReference>
<dbReference type="PANTHER" id="PTHR11361:SF34">
    <property type="entry name" value="DNA MISMATCH REPAIR PROTEIN MSH1, MITOCHONDRIAL"/>
    <property type="match status" value="1"/>
</dbReference>
<dbReference type="PANTHER" id="PTHR11361">
    <property type="entry name" value="DNA MISMATCH REPAIR PROTEIN MUTS FAMILY MEMBER"/>
    <property type="match status" value="1"/>
</dbReference>
<dbReference type="Pfam" id="PF01624">
    <property type="entry name" value="MutS_I"/>
    <property type="match status" value="1"/>
</dbReference>
<dbReference type="Pfam" id="PF05188">
    <property type="entry name" value="MutS_II"/>
    <property type="match status" value="1"/>
</dbReference>
<dbReference type="Pfam" id="PF05192">
    <property type="entry name" value="MutS_III"/>
    <property type="match status" value="1"/>
</dbReference>
<dbReference type="Pfam" id="PF05190">
    <property type="entry name" value="MutS_IV"/>
    <property type="match status" value="1"/>
</dbReference>
<dbReference type="Pfam" id="PF00488">
    <property type="entry name" value="MutS_V"/>
    <property type="match status" value="1"/>
</dbReference>
<dbReference type="PIRSF" id="PIRSF037677">
    <property type="entry name" value="DNA_mis_repair_Msh6"/>
    <property type="match status" value="1"/>
</dbReference>
<dbReference type="SMART" id="SM00534">
    <property type="entry name" value="MUTSac"/>
    <property type="match status" value="1"/>
</dbReference>
<dbReference type="SMART" id="SM00533">
    <property type="entry name" value="MUTSd"/>
    <property type="match status" value="1"/>
</dbReference>
<dbReference type="SUPFAM" id="SSF55271">
    <property type="entry name" value="DNA repair protein MutS, domain I"/>
    <property type="match status" value="1"/>
</dbReference>
<dbReference type="SUPFAM" id="SSF53150">
    <property type="entry name" value="DNA repair protein MutS, domain II"/>
    <property type="match status" value="1"/>
</dbReference>
<dbReference type="SUPFAM" id="SSF48334">
    <property type="entry name" value="DNA repair protein MutS, domain III"/>
    <property type="match status" value="1"/>
</dbReference>
<dbReference type="SUPFAM" id="SSF52540">
    <property type="entry name" value="P-loop containing nucleoside triphosphate hydrolases"/>
    <property type="match status" value="1"/>
</dbReference>
<dbReference type="PROSITE" id="PS00486">
    <property type="entry name" value="DNA_MISMATCH_REPAIR_2"/>
    <property type="match status" value="1"/>
</dbReference>